<accession>Q31LZ7</accession>
<name>TRHO_SYNE7</name>
<comment type="function">
    <text evidence="1">Catalyzes oxygen-dependent 5-hydroxyuridine (ho5U) modification at position 34 in tRNAs.</text>
</comment>
<comment type="catalytic activity">
    <reaction evidence="1">
        <text>uridine(34) in tRNA + AH2 + O2 = 5-hydroxyuridine(34) in tRNA + A + H2O</text>
        <dbReference type="Rhea" id="RHEA:64224"/>
        <dbReference type="Rhea" id="RHEA-COMP:11727"/>
        <dbReference type="Rhea" id="RHEA-COMP:13381"/>
        <dbReference type="ChEBI" id="CHEBI:13193"/>
        <dbReference type="ChEBI" id="CHEBI:15377"/>
        <dbReference type="ChEBI" id="CHEBI:15379"/>
        <dbReference type="ChEBI" id="CHEBI:17499"/>
        <dbReference type="ChEBI" id="CHEBI:65315"/>
        <dbReference type="ChEBI" id="CHEBI:136877"/>
    </reaction>
</comment>
<comment type="similarity">
    <text evidence="1">Belongs to the TrhO family.</text>
</comment>
<keyword id="KW-0560">Oxidoreductase</keyword>
<keyword id="KW-1185">Reference proteome</keyword>
<keyword id="KW-0819">tRNA processing</keyword>
<dbReference type="EC" id="1.14.-.-" evidence="1"/>
<dbReference type="EMBL" id="CP000100">
    <property type="protein sequence ID" value="ABB57922.1"/>
    <property type="molecule type" value="Genomic_DNA"/>
</dbReference>
<dbReference type="RefSeq" id="WP_011244513.1">
    <property type="nucleotide sequence ID" value="NZ_JACJTX010000001.1"/>
</dbReference>
<dbReference type="SMR" id="Q31LZ7"/>
<dbReference type="STRING" id="1140.Synpcc7942_1892"/>
<dbReference type="PaxDb" id="1140-Synpcc7942_1892"/>
<dbReference type="KEGG" id="syf:Synpcc7942_1892"/>
<dbReference type="eggNOG" id="COG1054">
    <property type="taxonomic scope" value="Bacteria"/>
</dbReference>
<dbReference type="HOGENOM" id="CLU_038878_0_1_3"/>
<dbReference type="OrthoDB" id="9778326at2"/>
<dbReference type="BioCyc" id="SYNEL:SYNPCC7942_1892-MONOMER"/>
<dbReference type="Proteomes" id="UP000889800">
    <property type="component" value="Chromosome"/>
</dbReference>
<dbReference type="GO" id="GO:0016705">
    <property type="term" value="F:oxidoreductase activity, acting on paired donors, with incorporation or reduction of molecular oxygen"/>
    <property type="evidence" value="ECO:0007669"/>
    <property type="project" value="UniProtKB-UniRule"/>
</dbReference>
<dbReference type="GO" id="GO:0006400">
    <property type="term" value="P:tRNA modification"/>
    <property type="evidence" value="ECO:0007669"/>
    <property type="project" value="UniProtKB-UniRule"/>
</dbReference>
<dbReference type="CDD" id="cd01518">
    <property type="entry name" value="RHOD_YceA"/>
    <property type="match status" value="1"/>
</dbReference>
<dbReference type="Gene3D" id="3.30.70.100">
    <property type="match status" value="1"/>
</dbReference>
<dbReference type="Gene3D" id="3.40.250.10">
    <property type="entry name" value="Rhodanese-like domain"/>
    <property type="match status" value="1"/>
</dbReference>
<dbReference type="HAMAP" id="MF_00469">
    <property type="entry name" value="TrhO"/>
    <property type="match status" value="1"/>
</dbReference>
<dbReference type="InterPro" id="IPR036046">
    <property type="entry name" value="Acylphosphatase-like_dom_sf"/>
</dbReference>
<dbReference type="InterPro" id="IPR001763">
    <property type="entry name" value="Rhodanese-like_dom"/>
</dbReference>
<dbReference type="InterPro" id="IPR036873">
    <property type="entry name" value="Rhodanese-like_dom_sf"/>
</dbReference>
<dbReference type="InterPro" id="IPR020936">
    <property type="entry name" value="TrhO"/>
</dbReference>
<dbReference type="InterPro" id="IPR040503">
    <property type="entry name" value="TRHO_N"/>
</dbReference>
<dbReference type="NCBIfam" id="NF001136">
    <property type="entry name" value="PRK00142.1-4"/>
    <property type="match status" value="1"/>
</dbReference>
<dbReference type="PANTHER" id="PTHR43268:SF3">
    <property type="entry name" value="RHODANESE-LIKE DOMAIN-CONTAINING PROTEIN 7-RELATED"/>
    <property type="match status" value="1"/>
</dbReference>
<dbReference type="PANTHER" id="PTHR43268">
    <property type="entry name" value="THIOSULFATE SULFURTRANSFERASE/RHODANESE-LIKE DOMAIN-CONTAINING PROTEIN 2"/>
    <property type="match status" value="1"/>
</dbReference>
<dbReference type="Pfam" id="PF00581">
    <property type="entry name" value="Rhodanese"/>
    <property type="match status" value="1"/>
</dbReference>
<dbReference type="Pfam" id="PF17773">
    <property type="entry name" value="UPF0176_N"/>
    <property type="match status" value="1"/>
</dbReference>
<dbReference type="SMART" id="SM00450">
    <property type="entry name" value="RHOD"/>
    <property type="match status" value="1"/>
</dbReference>
<dbReference type="SUPFAM" id="SSF54975">
    <property type="entry name" value="Acylphosphatase/BLUF domain-like"/>
    <property type="match status" value="1"/>
</dbReference>
<dbReference type="SUPFAM" id="SSF52821">
    <property type="entry name" value="Rhodanese/Cell cycle control phosphatase"/>
    <property type="match status" value="1"/>
</dbReference>
<dbReference type="PROSITE" id="PS50206">
    <property type="entry name" value="RHODANESE_3"/>
    <property type="match status" value="1"/>
</dbReference>
<sequence length="269" mass="29967">MSLVLINFYRFVALGDCDRWRQWLQDLCTALGLRGTILLAPEGINAGLAGNTEAIAQFLSELQQHPPFANLSFKSATVTDWPFARLKVKVKPEIVSLGCPELNPAERTGTLVAPQDWNQLLQDPEVVLIDVRNRFEIALGSFPRAIDPQTDRFRDFPRFVQEQLLPQPPAKVAMFCTGGIRCEKASAYLLEQGIETVYQLEGGILNYLEAIAPEENHWQGDCFVFDERIAVDRQLQTPQHQLCPACGQPVVATTCSHCQDSVQASSSPK</sequence>
<protein>
    <recommendedName>
        <fullName evidence="1">tRNA uridine(34) hydroxylase</fullName>
        <ecNumber evidence="1">1.14.-.-</ecNumber>
    </recommendedName>
    <alternativeName>
        <fullName evidence="1">tRNA hydroxylation protein O</fullName>
    </alternativeName>
</protein>
<evidence type="ECO:0000255" key="1">
    <source>
        <dbReference type="HAMAP-Rule" id="MF_00469"/>
    </source>
</evidence>
<reference key="1">
    <citation type="submission" date="2005-08" db="EMBL/GenBank/DDBJ databases">
        <title>Complete sequence of chromosome 1 of Synechococcus elongatus PCC 7942.</title>
        <authorList>
            <consortium name="US DOE Joint Genome Institute"/>
            <person name="Copeland A."/>
            <person name="Lucas S."/>
            <person name="Lapidus A."/>
            <person name="Barry K."/>
            <person name="Detter J.C."/>
            <person name="Glavina T."/>
            <person name="Hammon N."/>
            <person name="Israni S."/>
            <person name="Pitluck S."/>
            <person name="Schmutz J."/>
            <person name="Larimer F."/>
            <person name="Land M."/>
            <person name="Kyrpides N."/>
            <person name="Lykidis A."/>
            <person name="Golden S."/>
            <person name="Richardson P."/>
        </authorList>
    </citation>
    <scope>NUCLEOTIDE SEQUENCE [LARGE SCALE GENOMIC DNA]</scope>
    <source>
        <strain>ATCC 33912 / PCC 7942 / FACHB-805</strain>
    </source>
</reference>
<gene>
    <name evidence="1" type="primary">trhO</name>
    <name type="ordered locus">Synpcc7942_1892</name>
</gene>
<feature type="chain" id="PRO_0000242953" description="tRNA uridine(34) hydroxylase">
    <location>
        <begin position="1"/>
        <end position="269"/>
    </location>
</feature>
<feature type="domain" description="Rhodanese" evidence="1">
    <location>
        <begin position="122"/>
        <end position="216"/>
    </location>
</feature>
<feature type="active site" description="Cysteine persulfide intermediate" evidence="1">
    <location>
        <position position="176"/>
    </location>
</feature>
<proteinExistence type="inferred from homology"/>
<organism>
    <name type="scientific">Synechococcus elongatus (strain ATCC 33912 / PCC 7942 / FACHB-805)</name>
    <name type="common">Anacystis nidulans R2</name>
    <dbReference type="NCBI Taxonomy" id="1140"/>
    <lineage>
        <taxon>Bacteria</taxon>
        <taxon>Bacillati</taxon>
        <taxon>Cyanobacteriota</taxon>
        <taxon>Cyanophyceae</taxon>
        <taxon>Synechococcales</taxon>
        <taxon>Synechococcaceae</taxon>
        <taxon>Synechococcus</taxon>
    </lineage>
</organism>